<reference key="1">
    <citation type="journal article" date="2000" name="Nature">
        <title>Genome sequence of the endocellular bacterial symbiont of aphids Buchnera sp. APS.</title>
        <authorList>
            <person name="Shigenobu S."/>
            <person name="Watanabe H."/>
            <person name="Hattori M."/>
            <person name="Sakaki Y."/>
            <person name="Ishikawa H."/>
        </authorList>
    </citation>
    <scope>NUCLEOTIDE SEQUENCE [LARGE SCALE GENOMIC DNA]</scope>
    <source>
        <strain>APS</strain>
    </source>
</reference>
<accession>P57436</accession>
<dbReference type="EC" id="3.1.-.-" evidence="2"/>
<dbReference type="EMBL" id="BA000003">
    <property type="protein sequence ID" value="BAB13059.1"/>
    <property type="molecule type" value="Genomic_DNA"/>
</dbReference>
<dbReference type="RefSeq" id="NP_240173.1">
    <property type="nucleotide sequence ID" value="NC_002528.1"/>
</dbReference>
<dbReference type="RefSeq" id="WP_009874311.1">
    <property type="nucleotide sequence ID" value="NC_002528.1"/>
</dbReference>
<dbReference type="SMR" id="P57436"/>
<dbReference type="STRING" id="563178.BUAP5A_348"/>
<dbReference type="EnsemblBacteria" id="BAB13059">
    <property type="protein sequence ID" value="BAB13059"/>
    <property type="gene ID" value="BAB13059"/>
</dbReference>
<dbReference type="KEGG" id="buc:BU355"/>
<dbReference type="PATRIC" id="fig|107806.10.peg.368"/>
<dbReference type="eggNOG" id="COG0084">
    <property type="taxonomic scope" value="Bacteria"/>
</dbReference>
<dbReference type="HOGENOM" id="CLU_031506_4_0_6"/>
<dbReference type="BioCyc" id="BAPH107806:GBZJ-348-MONOMER"/>
<dbReference type="Proteomes" id="UP000001806">
    <property type="component" value="Chromosome"/>
</dbReference>
<dbReference type="GO" id="GO:0005829">
    <property type="term" value="C:cytosol"/>
    <property type="evidence" value="ECO:0007669"/>
    <property type="project" value="TreeGrafter"/>
</dbReference>
<dbReference type="GO" id="GO:0004536">
    <property type="term" value="F:DNA nuclease activity"/>
    <property type="evidence" value="ECO:0007669"/>
    <property type="project" value="InterPro"/>
</dbReference>
<dbReference type="GO" id="GO:0046872">
    <property type="term" value="F:metal ion binding"/>
    <property type="evidence" value="ECO:0007669"/>
    <property type="project" value="UniProtKB-KW"/>
</dbReference>
<dbReference type="CDD" id="cd01310">
    <property type="entry name" value="TatD_DNAse"/>
    <property type="match status" value="1"/>
</dbReference>
<dbReference type="FunFam" id="3.20.20.140:FF:000005">
    <property type="entry name" value="TatD family hydrolase"/>
    <property type="match status" value="1"/>
</dbReference>
<dbReference type="Gene3D" id="3.20.20.140">
    <property type="entry name" value="Metal-dependent hydrolases"/>
    <property type="match status" value="1"/>
</dbReference>
<dbReference type="InterPro" id="IPR018228">
    <property type="entry name" value="DNase_TatD-rel_CS"/>
</dbReference>
<dbReference type="InterPro" id="IPR032466">
    <property type="entry name" value="Metal_Hydrolase"/>
</dbReference>
<dbReference type="InterPro" id="IPR001130">
    <property type="entry name" value="TatD-like"/>
</dbReference>
<dbReference type="InterPro" id="IPR015991">
    <property type="entry name" value="TatD/YcfH-like"/>
</dbReference>
<dbReference type="NCBIfam" id="TIGR00010">
    <property type="entry name" value="YchF/TatD family DNA exonuclease"/>
    <property type="match status" value="1"/>
</dbReference>
<dbReference type="PANTHER" id="PTHR46124">
    <property type="entry name" value="D-AMINOACYL-TRNA DEACYLASE"/>
    <property type="match status" value="1"/>
</dbReference>
<dbReference type="PANTHER" id="PTHR46124:SF2">
    <property type="entry name" value="D-AMINOACYL-TRNA DEACYLASE"/>
    <property type="match status" value="1"/>
</dbReference>
<dbReference type="Pfam" id="PF01026">
    <property type="entry name" value="TatD_DNase"/>
    <property type="match status" value="1"/>
</dbReference>
<dbReference type="PIRSF" id="PIRSF005902">
    <property type="entry name" value="DNase_TatD"/>
    <property type="match status" value="1"/>
</dbReference>
<dbReference type="SUPFAM" id="SSF51556">
    <property type="entry name" value="Metallo-dependent hydrolases"/>
    <property type="match status" value="1"/>
</dbReference>
<dbReference type="PROSITE" id="PS01137">
    <property type="entry name" value="TATD_1"/>
    <property type="match status" value="1"/>
</dbReference>
<dbReference type="PROSITE" id="PS01090">
    <property type="entry name" value="TATD_2"/>
    <property type="match status" value="1"/>
</dbReference>
<dbReference type="PROSITE" id="PS01091">
    <property type="entry name" value="TATD_3"/>
    <property type="match status" value="1"/>
</dbReference>
<name>Y355_BUCAI</name>
<keyword id="KW-0378">Hydrolase</keyword>
<keyword id="KW-0479">Metal-binding</keyword>
<keyword id="KW-1185">Reference proteome</keyword>
<gene>
    <name type="ordered locus">BU355</name>
</gene>
<comment type="cofactor">
    <cofactor evidence="1">
        <name>a divalent metal cation</name>
        <dbReference type="ChEBI" id="CHEBI:60240"/>
    </cofactor>
    <text evidence="1">Binds 2 divalent metal cations per subunit.</text>
</comment>
<comment type="similarity">
    <text evidence="2">Belongs to the metallo-dependent hydrolases superfamily. TatD-type hydrolase family.</text>
</comment>
<proteinExistence type="inferred from homology"/>
<feature type="chain" id="PRO_0000202002" description="Uncharacterized metal-dependent hydrolase BU355">
    <location>
        <begin position="1"/>
        <end position="264"/>
    </location>
</feature>
<feature type="binding site" evidence="1">
    <location>
        <position position="7"/>
    </location>
    <ligand>
        <name>a divalent metal cation</name>
        <dbReference type="ChEBI" id="CHEBI:60240"/>
        <label>1</label>
    </ligand>
</feature>
<feature type="binding site" evidence="1">
    <location>
        <position position="9"/>
    </location>
    <ligand>
        <name>a divalent metal cation</name>
        <dbReference type="ChEBI" id="CHEBI:60240"/>
        <label>1</label>
    </ligand>
</feature>
<feature type="binding site" evidence="1">
    <location>
        <position position="102"/>
    </location>
    <ligand>
        <name>a divalent metal cation</name>
        <dbReference type="ChEBI" id="CHEBI:60240"/>
        <label>1</label>
    </ligand>
</feature>
<feature type="binding site" evidence="1">
    <location>
        <position position="102"/>
    </location>
    <ligand>
        <name>a divalent metal cation</name>
        <dbReference type="ChEBI" id="CHEBI:60240"/>
        <label>2</label>
    </ligand>
</feature>
<feature type="binding site" evidence="1">
    <location>
        <position position="138"/>
    </location>
    <ligand>
        <name>a divalent metal cation</name>
        <dbReference type="ChEBI" id="CHEBI:60240"/>
        <label>2</label>
    </ligand>
</feature>
<feature type="binding site" evidence="1">
    <location>
        <position position="163"/>
    </location>
    <ligand>
        <name>a divalent metal cation</name>
        <dbReference type="ChEBI" id="CHEBI:60240"/>
        <label>2</label>
    </ligand>
</feature>
<feature type="binding site" evidence="1">
    <location>
        <position position="213"/>
    </location>
    <ligand>
        <name>a divalent metal cation</name>
        <dbReference type="ChEBI" id="CHEBI:60240"/>
        <label>1</label>
    </ligand>
</feature>
<protein>
    <recommendedName>
        <fullName evidence="2">Uncharacterized metal-dependent hydrolase BU355</fullName>
        <ecNumber evidence="2">3.1.-.-</ecNumber>
    </recommendedName>
</protein>
<organism>
    <name type="scientific">Buchnera aphidicola subsp. Acyrthosiphon pisum (strain APS)</name>
    <name type="common">Acyrthosiphon pisum symbiotic bacterium</name>
    <dbReference type="NCBI Taxonomy" id="107806"/>
    <lineage>
        <taxon>Bacteria</taxon>
        <taxon>Pseudomonadati</taxon>
        <taxon>Pseudomonadota</taxon>
        <taxon>Gammaproteobacteria</taxon>
        <taxon>Enterobacterales</taxon>
        <taxon>Erwiniaceae</taxon>
        <taxon>Buchnera</taxon>
    </lineage>
</organism>
<sequence length="264" mass="30520">MFLIDSHCHLDRLNYNLPLENIEDVLKKSYQNHVKNFLTVSTCISNFYNIKKLFKKYNTIFYSCGVHPLNCKKELNLFHTIENLSNEIKKLSCIKDVIALGETGLDYYYSSDTKKIQQDFFREHIRVAIKLKKPIIVHSRNASEDTIKILQEENAEKCKGVLHSFTGDYNTACKLLDLGFYISCSGIITFKNSLELCKTIRKIPLNRLLIETDSPYLSPAPYRGKGNQPAYLFYIAEYLSILKEIDIHALGHITTSNFRTLFNI</sequence>
<evidence type="ECO:0000250" key="1">
    <source>
        <dbReference type="UniProtKB" id="P0AFQ7"/>
    </source>
</evidence>
<evidence type="ECO:0000305" key="2"/>